<name>SYR_DECAR</name>
<reference key="1">
    <citation type="journal article" date="2009" name="BMC Genomics">
        <title>Metabolic analysis of the soil microbe Dechloromonas aromatica str. RCB: indications of a surprisingly complex life-style and cryptic anaerobic pathways for aromatic degradation.</title>
        <authorList>
            <person name="Salinero K.K."/>
            <person name="Keller K."/>
            <person name="Feil W.S."/>
            <person name="Feil H."/>
            <person name="Trong S."/>
            <person name="Di Bartolo G."/>
            <person name="Lapidus A."/>
        </authorList>
    </citation>
    <scope>NUCLEOTIDE SEQUENCE [LARGE SCALE GENOMIC DNA]</scope>
    <source>
        <strain>RCB</strain>
    </source>
</reference>
<keyword id="KW-0030">Aminoacyl-tRNA synthetase</keyword>
<keyword id="KW-0067">ATP-binding</keyword>
<keyword id="KW-0963">Cytoplasm</keyword>
<keyword id="KW-0436">Ligase</keyword>
<keyword id="KW-0547">Nucleotide-binding</keyword>
<keyword id="KW-0648">Protein biosynthesis</keyword>
<proteinExistence type="inferred from homology"/>
<protein>
    <recommendedName>
        <fullName evidence="1">Arginine--tRNA ligase</fullName>
        <ecNumber evidence="1">6.1.1.19</ecNumber>
    </recommendedName>
    <alternativeName>
        <fullName evidence="1">Arginyl-tRNA synthetase</fullName>
        <shortName evidence="1">ArgRS</shortName>
    </alternativeName>
</protein>
<evidence type="ECO:0000255" key="1">
    <source>
        <dbReference type="HAMAP-Rule" id="MF_00123"/>
    </source>
</evidence>
<feature type="chain" id="PRO_0000242011" description="Arginine--tRNA ligase">
    <location>
        <begin position="1"/>
        <end position="587"/>
    </location>
</feature>
<feature type="short sequence motif" description="'HIGH' region">
    <location>
        <begin position="127"/>
        <end position="137"/>
    </location>
</feature>
<comment type="catalytic activity">
    <reaction evidence="1">
        <text>tRNA(Arg) + L-arginine + ATP = L-arginyl-tRNA(Arg) + AMP + diphosphate</text>
        <dbReference type="Rhea" id="RHEA:20301"/>
        <dbReference type="Rhea" id="RHEA-COMP:9658"/>
        <dbReference type="Rhea" id="RHEA-COMP:9673"/>
        <dbReference type="ChEBI" id="CHEBI:30616"/>
        <dbReference type="ChEBI" id="CHEBI:32682"/>
        <dbReference type="ChEBI" id="CHEBI:33019"/>
        <dbReference type="ChEBI" id="CHEBI:78442"/>
        <dbReference type="ChEBI" id="CHEBI:78513"/>
        <dbReference type="ChEBI" id="CHEBI:456215"/>
        <dbReference type="EC" id="6.1.1.19"/>
    </reaction>
</comment>
<comment type="subunit">
    <text evidence="1">Monomer.</text>
</comment>
<comment type="subcellular location">
    <subcellularLocation>
        <location evidence="1">Cytoplasm</location>
    </subcellularLocation>
</comment>
<comment type="similarity">
    <text evidence="1">Belongs to the class-I aminoacyl-tRNA synthetase family.</text>
</comment>
<accession>Q478Y7</accession>
<gene>
    <name evidence="1" type="primary">argS</name>
    <name type="ordered locus">Daro_3866</name>
</gene>
<sequence length="587" mass="64776">MAQDVKTQLTALLQQALASVAPAATDTPIHLERPRDPTHGDFATNLAMQLAKALKKNPREIANQLLAELPPSRLVTKAEVAGAGFINFTLDAGFKTDVVKAVLAEGDNFGRSNQGGWQKVQVEFVSANPTGPLHVGHGRGAAYGASLSSLLTFAGWDVTREYYVNDAGRQMDILGLSTWLRYLEQHGVDVPFLPNAYQGDYVRDMAKQMTVAHGDKFVRPAADVLAGTPGLPEAERADDEAKRQRDLHLDALIANAKVLLGPDWTYVHQHALSEQLADGRDDLEEFGVHFDVWFSEQALFDTGLVARCVDLLEKNGHLYVQNGARWFKSTTFGDEKDRVVQRENGLYTYFASDIAYHLNKFERGFDKVINIWGADHHGYIARVNGAITALGLDASKLQVALVQFAVLYRNGQKASMSTRSGEFVTLRELRGEVGNDACRFFYALRKSDQHLDFDLDLAKSQTNENPVYYIQYAHARVCSVINQWGGDLATLADANLALLDNPRELAIASKLAEFRDVIDGAARELAPHLIAFYLKDLAGEFHGWYNAERMLVDDAALRDARVALAAAVRQTIRNGMTILGVSCPDSM</sequence>
<organism>
    <name type="scientific">Dechloromonas aromatica (strain RCB)</name>
    <dbReference type="NCBI Taxonomy" id="159087"/>
    <lineage>
        <taxon>Bacteria</taxon>
        <taxon>Pseudomonadati</taxon>
        <taxon>Pseudomonadota</taxon>
        <taxon>Betaproteobacteria</taxon>
        <taxon>Rhodocyclales</taxon>
        <taxon>Azonexaceae</taxon>
        <taxon>Dechloromonas</taxon>
    </lineage>
</organism>
<dbReference type="EC" id="6.1.1.19" evidence="1"/>
<dbReference type="EMBL" id="CP000089">
    <property type="protein sequence ID" value="AAZ48594.1"/>
    <property type="molecule type" value="Genomic_DNA"/>
</dbReference>
<dbReference type="SMR" id="Q478Y7"/>
<dbReference type="STRING" id="159087.Daro_3866"/>
<dbReference type="KEGG" id="dar:Daro_3866"/>
<dbReference type="eggNOG" id="COG0018">
    <property type="taxonomic scope" value="Bacteria"/>
</dbReference>
<dbReference type="HOGENOM" id="CLU_006406_0_1_4"/>
<dbReference type="OrthoDB" id="9803211at2"/>
<dbReference type="GO" id="GO:0005737">
    <property type="term" value="C:cytoplasm"/>
    <property type="evidence" value="ECO:0007669"/>
    <property type="project" value="UniProtKB-SubCell"/>
</dbReference>
<dbReference type="GO" id="GO:0004814">
    <property type="term" value="F:arginine-tRNA ligase activity"/>
    <property type="evidence" value="ECO:0007669"/>
    <property type="project" value="UniProtKB-UniRule"/>
</dbReference>
<dbReference type="GO" id="GO:0005524">
    <property type="term" value="F:ATP binding"/>
    <property type="evidence" value="ECO:0007669"/>
    <property type="project" value="UniProtKB-UniRule"/>
</dbReference>
<dbReference type="GO" id="GO:0006420">
    <property type="term" value="P:arginyl-tRNA aminoacylation"/>
    <property type="evidence" value="ECO:0007669"/>
    <property type="project" value="UniProtKB-UniRule"/>
</dbReference>
<dbReference type="CDD" id="cd00671">
    <property type="entry name" value="ArgRS_core"/>
    <property type="match status" value="1"/>
</dbReference>
<dbReference type="FunFam" id="1.10.730.10:FF:000008">
    <property type="entry name" value="Arginine--tRNA ligase"/>
    <property type="match status" value="1"/>
</dbReference>
<dbReference type="FunFam" id="3.30.1360.70:FF:000003">
    <property type="entry name" value="Arginine--tRNA ligase"/>
    <property type="match status" value="1"/>
</dbReference>
<dbReference type="Gene3D" id="3.30.1360.70">
    <property type="entry name" value="Arginyl tRNA synthetase N-terminal domain"/>
    <property type="match status" value="1"/>
</dbReference>
<dbReference type="Gene3D" id="3.40.50.620">
    <property type="entry name" value="HUPs"/>
    <property type="match status" value="1"/>
</dbReference>
<dbReference type="Gene3D" id="1.10.730.10">
    <property type="entry name" value="Isoleucyl-tRNA Synthetase, Domain 1"/>
    <property type="match status" value="1"/>
</dbReference>
<dbReference type="HAMAP" id="MF_00123">
    <property type="entry name" value="Arg_tRNA_synth"/>
    <property type="match status" value="1"/>
</dbReference>
<dbReference type="InterPro" id="IPR001412">
    <property type="entry name" value="aa-tRNA-synth_I_CS"/>
</dbReference>
<dbReference type="InterPro" id="IPR001278">
    <property type="entry name" value="Arg-tRNA-ligase"/>
</dbReference>
<dbReference type="InterPro" id="IPR005148">
    <property type="entry name" value="Arg-tRNA-synth_N"/>
</dbReference>
<dbReference type="InterPro" id="IPR036695">
    <property type="entry name" value="Arg-tRNA-synth_N_sf"/>
</dbReference>
<dbReference type="InterPro" id="IPR035684">
    <property type="entry name" value="ArgRS_core"/>
</dbReference>
<dbReference type="InterPro" id="IPR008909">
    <property type="entry name" value="DALR_anticod-bd"/>
</dbReference>
<dbReference type="InterPro" id="IPR014729">
    <property type="entry name" value="Rossmann-like_a/b/a_fold"/>
</dbReference>
<dbReference type="InterPro" id="IPR009080">
    <property type="entry name" value="tRNAsynth_Ia_anticodon-bd"/>
</dbReference>
<dbReference type="NCBIfam" id="TIGR00456">
    <property type="entry name" value="argS"/>
    <property type="match status" value="1"/>
</dbReference>
<dbReference type="PANTHER" id="PTHR11956:SF5">
    <property type="entry name" value="ARGININE--TRNA LIGASE, CYTOPLASMIC"/>
    <property type="match status" value="1"/>
</dbReference>
<dbReference type="PANTHER" id="PTHR11956">
    <property type="entry name" value="ARGINYL-TRNA SYNTHETASE"/>
    <property type="match status" value="1"/>
</dbReference>
<dbReference type="Pfam" id="PF03485">
    <property type="entry name" value="Arg_tRNA_synt_N"/>
    <property type="match status" value="1"/>
</dbReference>
<dbReference type="Pfam" id="PF05746">
    <property type="entry name" value="DALR_1"/>
    <property type="match status" value="1"/>
</dbReference>
<dbReference type="Pfam" id="PF00750">
    <property type="entry name" value="tRNA-synt_1d"/>
    <property type="match status" value="2"/>
</dbReference>
<dbReference type="PRINTS" id="PR01038">
    <property type="entry name" value="TRNASYNTHARG"/>
</dbReference>
<dbReference type="SMART" id="SM01016">
    <property type="entry name" value="Arg_tRNA_synt_N"/>
    <property type="match status" value="1"/>
</dbReference>
<dbReference type="SMART" id="SM00836">
    <property type="entry name" value="DALR_1"/>
    <property type="match status" value="1"/>
</dbReference>
<dbReference type="SUPFAM" id="SSF47323">
    <property type="entry name" value="Anticodon-binding domain of a subclass of class I aminoacyl-tRNA synthetases"/>
    <property type="match status" value="1"/>
</dbReference>
<dbReference type="SUPFAM" id="SSF55190">
    <property type="entry name" value="Arginyl-tRNA synthetase (ArgRS), N-terminal 'additional' domain"/>
    <property type="match status" value="1"/>
</dbReference>
<dbReference type="SUPFAM" id="SSF52374">
    <property type="entry name" value="Nucleotidylyl transferase"/>
    <property type="match status" value="1"/>
</dbReference>
<dbReference type="PROSITE" id="PS00178">
    <property type="entry name" value="AA_TRNA_LIGASE_I"/>
    <property type="match status" value="1"/>
</dbReference>